<organism>
    <name type="scientific">Aliivibrio fischeri (strain MJ11)</name>
    <name type="common">Vibrio fischeri</name>
    <dbReference type="NCBI Taxonomy" id="388396"/>
    <lineage>
        <taxon>Bacteria</taxon>
        <taxon>Pseudomonadati</taxon>
        <taxon>Pseudomonadota</taxon>
        <taxon>Gammaproteobacteria</taxon>
        <taxon>Vibrionales</taxon>
        <taxon>Vibrionaceae</taxon>
        <taxon>Aliivibrio</taxon>
    </lineage>
</organism>
<comment type="subcellular location">
    <subcellularLocation>
        <location evidence="1">Cytoplasm</location>
    </subcellularLocation>
</comment>
<comment type="similarity">
    <text evidence="1">Belongs to the TACO1 family.</text>
</comment>
<accession>B5ESS5</accession>
<reference key="1">
    <citation type="submission" date="2008-08" db="EMBL/GenBank/DDBJ databases">
        <title>Complete sequence of Vibrio fischeri strain MJ11.</title>
        <authorList>
            <person name="Mandel M.J."/>
            <person name="Stabb E.V."/>
            <person name="Ruby E.G."/>
            <person name="Ferriera S."/>
            <person name="Johnson J."/>
            <person name="Kravitz S."/>
            <person name="Beeson K."/>
            <person name="Sutton G."/>
            <person name="Rogers Y.-H."/>
            <person name="Friedman R."/>
            <person name="Frazier M."/>
            <person name="Venter J.C."/>
        </authorList>
    </citation>
    <scope>NUCLEOTIDE SEQUENCE [LARGE SCALE GENOMIC DNA]</scope>
    <source>
        <strain>MJ11</strain>
    </source>
</reference>
<protein>
    <recommendedName>
        <fullName evidence="1">Probable transcriptional regulatory protein VFMJ11_A0186</fullName>
    </recommendedName>
</protein>
<name>Y2986_ALIFM</name>
<evidence type="ECO:0000255" key="1">
    <source>
        <dbReference type="HAMAP-Rule" id="MF_00693"/>
    </source>
</evidence>
<sequence>MGRSFEVRKASMAKTQGAKIKVYSKYGKEIYMCAKNGGADPDMNLSLKHLISKAKKDQVPAHVIDKALDKATGGGGEDYQHARYEGFAPGGASVIVDCLTDNGNRTFQDVRQCFVKTGAKIGSPGTSAHMFDHQAVFQFKGDDEEAVLEALMMQDADVTDIELEDGVITVFAPNTEFFKVKTALAAEYPDLVLDVEEITFVPQNHTPVTGEDAEKFQKFLDMLDDCDDVQQVYHNAELED</sequence>
<feature type="chain" id="PRO_1000132254" description="Probable transcriptional regulatory protein VFMJ11_A0186">
    <location>
        <begin position="1"/>
        <end position="240"/>
    </location>
</feature>
<dbReference type="EMBL" id="CP001133">
    <property type="protein sequence ID" value="ACH63551.1"/>
    <property type="molecule type" value="Genomic_DNA"/>
</dbReference>
<dbReference type="RefSeq" id="WP_005421967.1">
    <property type="nucleotide sequence ID" value="NC_011186.1"/>
</dbReference>
<dbReference type="SMR" id="B5ESS5"/>
<dbReference type="GeneID" id="54165475"/>
<dbReference type="KEGG" id="vfm:VFMJ11_A0186"/>
<dbReference type="HOGENOM" id="CLU_062974_2_0_6"/>
<dbReference type="Proteomes" id="UP000001857">
    <property type="component" value="Chromosome II"/>
</dbReference>
<dbReference type="GO" id="GO:0005829">
    <property type="term" value="C:cytosol"/>
    <property type="evidence" value="ECO:0007669"/>
    <property type="project" value="TreeGrafter"/>
</dbReference>
<dbReference type="GO" id="GO:0003677">
    <property type="term" value="F:DNA binding"/>
    <property type="evidence" value="ECO:0007669"/>
    <property type="project" value="UniProtKB-UniRule"/>
</dbReference>
<dbReference type="GO" id="GO:0006355">
    <property type="term" value="P:regulation of DNA-templated transcription"/>
    <property type="evidence" value="ECO:0007669"/>
    <property type="project" value="UniProtKB-UniRule"/>
</dbReference>
<dbReference type="FunFam" id="1.10.10.200:FF:000003">
    <property type="entry name" value="Probable transcriptional regulatory protein YeeN"/>
    <property type="match status" value="1"/>
</dbReference>
<dbReference type="Gene3D" id="1.10.10.200">
    <property type="match status" value="1"/>
</dbReference>
<dbReference type="Gene3D" id="3.30.70.980">
    <property type="match status" value="2"/>
</dbReference>
<dbReference type="HAMAP" id="MF_00693">
    <property type="entry name" value="Transcrip_reg_TACO1"/>
    <property type="match status" value="1"/>
</dbReference>
<dbReference type="InterPro" id="IPR017856">
    <property type="entry name" value="Integrase-like_N"/>
</dbReference>
<dbReference type="InterPro" id="IPR048300">
    <property type="entry name" value="TACO1_YebC-like_2nd/3rd_dom"/>
</dbReference>
<dbReference type="InterPro" id="IPR049083">
    <property type="entry name" value="TACO1_YebC_N"/>
</dbReference>
<dbReference type="InterPro" id="IPR002876">
    <property type="entry name" value="Transcrip_reg_TACO1-like"/>
</dbReference>
<dbReference type="InterPro" id="IPR026564">
    <property type="entry name" value="Transcrip_reg_TACO1-like_dom3"/>
</dbReference>
<dbReference type="InterPro" id="IPR029072">
    <property type="entry name" value="YebC-like"/>
</dbReference>
<dbReference type="NCBIfam" id="NF009044">
    <property type="entry name" value="PRK12378.1"/>
    <property type="match status" value="1"/>
</dbReference>
<dbReference type="PANTHER" id="PTHR12532">
    <property type="entry name" value="TRANSLATIONAL ACTIVATOR OF CYTOCHROME C OXIDASE 1"/>
    <property type="match status" value="1"/>
</dbReference>
<dbReference type="PANTHER" id="PTHR12532:SF0">
    <property type="entry name" value="TRANSLATIONAL ACTIVATOR OF CYTOCHROME C OXIDASE 1"/>
    <property type="match status" value="1"/>
</dbReference>
<dbReference type="Pfam" id="PF20772">
    <property type="entry name" value="TACO1_YebC_N"/>
    <property type="match status" value="1"/>
</dbReference>
<dbReference type="Pfam" id="PF01709">
    <property type="entry name" value="Transcrip_reg"/>
    <property type="match status" value="1"/>
</dbReference>
<dbReference type="SUPFAM" id="SSF75625">
    <property type="entry name" value="YebC-like"/>
    <property type="match status" value="1"/>
</dbReference>
<proteinExistence type="inferred from homology"/>
<gene>
    <name type="ordered locus">VFMJ11_A0186</name>
</gene>
<keyword id="KW-0963">Cytoplasm</keyword>
<keyword id="KW-0238">DNA-binding</keyword>
<keyword id="KW-0804">Transcription</keyword>
<keyword id="KW-0805">Transcription regulation</keyword>